<comment type="function">
    <text>Involved in oxygen transport from the lung to the various peripheral tissues.</text>
</comment>
<comment type="subunit">
    <text>Heterotetramer of two alpha chains and two beta chains.</text>
</comment>
<comment type="tissue specificity">
    <text>Red blood cells.</text>
</comment>
<comment type="similarity">
    <text evidence="2">Belongs to the globin family.</text>
</comment>
<feature type="chain" id="PRO_0000053089" description="Hemoglobin subunit beta">
    <location>
        <begin position="1"/>
        <end position="145"/>
    </location>
</feature>
<feature type="domain" description="Globin" evidence="2">
    <location>
        <begin position="1"/>
        <end position="145"/>
    </location>
</feature>
<feature type="binding site" description="distal binding residue">
    <location>
        <position position="62"/>
    </location>
    <ligand>
        <name>heme b</name>
        <dbReference type="ChEBI" id="CHEBI:60344"/>
    </ligand>
    <ligandPart>
        <name>Fe</name>
        <dbReference type="ChEBI" id="CHEBI:18248"/>
    </ligandPart>
</feature>
<feature type="binding site" description="proximal binding residue">
    <location>
        <position position="91"/>
    </location>
    <ligand>
        <name>heme b</name>
        <dbReference type="ChEBI" id="CHEBI:60344"/>
    </ligand>
    <ligandPart>
        <name>Fe</name>
        <dbReference type="ChEBI" id="CHEBI:18248"/>
    </ligandPart>
</feature>
<feature type="modified residue" description="Phosphothreonine" evidence="1">
    <location>
        <position position="11"/>
    </location>
</feature>
<feature type="modified residue" description="N6-acetyllysine" evidence="1">
    <location>
        <position position="58"/>
    </location>
</feature>
<feature type="modified residue" description="N6-acetyllysine" evidence="1">
    <location>
        <position position="81"/>
    </location>
</feature>
<feature type="modified residue" description="S-nitrosocysteine" evidence="1">
    <location>
        <position position="92"/>
    </location>
</feature>
<evidence type="ECO:0000250" key="1">
    <source>
        <dbReference type="UniProtKB" id="P68871"/>
    </source>
</evidence>
<evidence type="ECO:0000255" key="2">
    <source>
        <dbReference type="PROSITE-ProRule" id="PRU00238"/>
    </source>
</evidence>
<dbReference type="PIR" id="S13609">
    <property type="entry name" value="S13609"/>
</dbReference>
<dbReference type="SMR" id="P21380"/>
<dbReference type="GO" id="GO:0072562">
    <property type="term" value="C:blood microparticle"/>
    <property type="evidence" value="ECO:0007669"/>
    <property type="project" value="TreeGrafter"/>
</dbReference>
<dbReference type="GO" id="GO:0031838">
    <property type="term" value="C:haptoglobin-hemoglobin complex"/>
    <property type="evidence" value="ECO:0007669"/>
    <property type="project" value="TreeGrafter"/>
</dbReference>
<dbReference type="GO" id="GO:0005833">
    <property type="term" value="C:hemoglobin complex"/>
    <property type="evidence" value="ECO:0007669"/>
    <property type="project" value="InterPro"/>
</dbReference>
<dbReference type="GO" id="GO:0031720">
    <property type="term" value="F:haptoglobin binding"/>
    <property type="evidence" value="ECO:0007669"/>
    <property type="project" value="TreeGrafter"/>
</dbReference>
<dbReference type="GO" id="GO:0020037">
    <property type="term" value="F:heme binding"/>
    <property type="evidence" value="ECO:0007669"/>
    <property type="project" value="InterPro"/>
</dbReference>
<dbReference type="GO" id="GO:0031721">
    <property type="term" value="F:hemoglobin alpha binding"/>
    <property type="evidence" value="ECO:0007669"/>
    <property type="project" value="TreeGrafter"/>
</dbReference>
<dbReference type="GO" id="GO:0046872">
    <property type="term" value="F:metal ion binding"/>
    <property type="evidence" value="ECO:0007669"/>
    <property type="project" value="UniProtKB-KW"/>
</dbReference>
<dbReference type="GO" id="GO:0043177">
    <property type="term" value="F:organic acid binding"/>
    <property type="evidence" value="ECO:0007669"/>
    <property type="project" value="TreeGrafter"/>
</dbReference>
<dbReference type="GO" id="GO:0019825">
    <property type="term" value="F:oxygen binding"/>
    <property type="evidence" value="ECO:0007669"/>
    <property type="project" value="InterPro"/>
</dbReference>
<dbReference type="GO" id="GO:0005344">
    <property type="term" value="F:oxygen carrier activity"/>
    <property type="evidence" value="ECO:0007669"/>
    <property type="project" value="UniProtKB-KW"/>
</dbReference>
<dbReference type="GO" id="GO:0004601">
    <property type="term" value="F:peroxidase activity"/>
    <property type="evidence" value="ECO:0007669"/>
    <property type="project" value="TreeGrafter"/>
</dbReference>
<dbReference type="GO" id="GO:0042744">
    <property type="term" value="P:hydrogen peroxide catabolic process"/>
    <property type="evidence" value="ECO:0007669"/>
    <property type="project" value="TreeGrafter"/>
</dbReference>
<dbReference type="CDD" id="cd08925">
    <property type="entry name" value="Hb-beta-like"/>
    <property type="match status" value="1"/>
</dbReference>
<dbReference type="FunFam" id="1.10.490.10:FF:000001">
    <property type="entry name" value="Hemoglobin subunit beta"/>
    <property type="match status" value="1"/>
</dbReference>
<dbReference type="Gene3D" id="1.10.490.10">
    <property type="entry name" value="Globins"/>
    <property type="match status" value="1"/>
</dbReference>
<dbReference type="InterPro" id="IPR000971">
    <property type="entry name" value="Globin"/>
</dbReference>
<dbReference type="InterPro" id="IPR009050">
    <property type="entry name" value="Globin-like_sf"/>
</dbReference>
<dbReference type="InterPro" id="IPR012292">
    <property type="entry name" value="Globin/Proto"/>
</dbReference>
<dbReference type="InterPro" id="IPR002337">
    <property type="entry name" value="Hemoglobin_b"/>
</dbReference>
<dbReference type="InterPro" id="IPR050056">
    <property type="entry name" value="Hemoglobin_oxygen_transport"/>
</dbReference>
<dbReference type="PANTHER" id="PTHR11442">
    <property type="entry name" value="HEMOGLOBIN FAMILY MEMBER"/>
    <property type="match status" value="1"/>
</dbReference>
<dbReference type="PANTHER" id="PTHR11442:SF42">
    <property type="entry name" value="HEMOGLOBIN SUBUNIT BETA"/>
    <property type="match status" value="1"/>
</dbReference>
<dbReference type="Pfam" id="PF00042">
    <property type="entry name" value="Globin"/>
    <property type="match status" value="1"/>
</dbReference>
<dbReference type="PRINTS" id="PR00814">
    <property type="entry name" value="BETAHAEM"/>
</dbReference>
<dbReference type="SUPFAM" id="SSF46458">
    <property type="entry name" value="Globin-like"/>
    <property type="match status" value="1"/>
</dbReference>
<dbReference type="PROSITE" id="PS01033">
    <property type="entry name" value="GLOBIN"/>
    <property type="match status" value="1"/>
</dbReference>
<organism>
    <name type="scientific">Rangifer tarandus</name>
    <name type="common">Reindeer</name>
    <name type="synonym">Cervus tarandus</name>
    <dbReference type="NCBI Taxonomy" id="9870"/>
    <lineage>
        <taxon>Eukaryota</taxon>
        <taxon>Metazoa</taxon>
        <taxon>Chordata</taxon>
        <taxon>Craniata</taxon>
        <taxon>Vertebrata</taxon>
        <taxon>Euteleostomi</taxon>
        <taxon>Mammalia</taxon>
        <taxon>Eutheria</taxon>
        <taxon>Laurasiatheria</taxon>
        <taxon>Artiodactyla</taxon>
        <taxon>Ruminantia</taxon>
        <taxon>Pecora</taxon>
        <taxon>Cervidae</taxon>
        <taxon>Odocoileinae</taxon>
        <taxon>Rangifer</taxon>
    </lineage>
</organism>
<accession>P21380</accession>
<gene>
    <name type="primary">HBB</name>
</gene>
<protein>
    <recommendedName>
        <fullName>Hemoglobin subunit beta</fullName>
    </recommendedName>
    <alternativeName>
        <fullName>Beta-globin</fullName>
    </alternativeName>
    <alternativeName>
        <fullName>Hemoglobin beta chain</fullName>
    </alternativeName>
</protein>
<reference key="1">
    <citation type="journal article" date="1991" name="Biochim. Biophys. Acta">
        <title>The primary structure of hemoglobin from reindeer (Rangifer tarandus tarandus) and its functional implications.</title>
        <authorList>
            <person name="Petruzzelli R."/>
            <person name="Barra D."/>
            <person name="Bossa F."/>
            <person name="Condo S.G."/>
            <person name="Brix O."/>
            <person name="Nuutinen M."/>
            <person name="Giardina B."/>
        </authorList>
    </citation>
    <scope>PROTEIN SEQUENCE</scope>
</reference>
<keyword id="KW-0007">Acetylation</keyword>
<keyword id="KW-0903">Direct protein sequencing</keyword>
<keyword id="KW-0349">Heme</keyword>
<keyword id="KW-0408">Iron</keyword>
<keyword id="KW-0479">Metal-binding</keyword>
<keyword id="KW-0561">Oxygen transport</keyword>
<keyword id="KW-0597">Phosphoprotein</keyword>
<keyword id="KW-0702">S-nitrosylation</keyword>
<keyword id="KW-0813">Transport</keyword>
<name>HBB_RANTA</name>
<proteinExistence type="evidence at protein level"/>
<sequence>MLTSEEKAAVTGFWGKVKVDEVGAEALGRLLVVYPWTQRFFEHFGDLSSADAIMHNDKVKAHGKRVLDAFSDGLKHLDDLKGAFAKLSELHCDKLHVDPENFRLLGNVLVVVLARHFGKDFTPVLQADYQKVVTGVANALAHRYH</sequence>